<feature type="chain" id="PRO_1000009971" description="DNA mismatch repair protein MutL">
    <location>
        <begin position="1"/>
        <end position="582"/>
    </location>
</feature>
<name>MUTL_ACICJ</name>
<dbReference type="EMBL" id="CP000697">
    <property type="protein sequence ID" value="ABQ29850.1"/>
    <property type="molecule type" value="Genomic_DNA"/>
</dbReference>
<dbReference type="RefSeq" id="WP_011941657.1">
    <property type="nucleotide sequence ID" value="NC_009484.1"/>
</dbReference>
<dbReference type="SMR" id="A5FW68"/>
<dbReference type="STRING" id="349163.Acry_0628"/>
<dbReference type="KEGG" id="acr:Acry_0628"/>
<dbReference type="eggNOG" id="COG0323">
    <property type="taxonomic scope" value="Bacteria"/>
</dbReference>
<dbReference type="HOGENOM" id="CLU_004131_4_2_5"/>
<dbReference type="Proteomes" id="UP000000245">
    <property type="component" value="Chromosome"/>
</dbReference>
<dbReference type="GO" id="GO:0032300">
    <property type="term" value="C:mismatch repair complex"/>
    <property type="evidence" value="ECO:0007669"/>
    <property type="project" value="InterPro"/>
</dbReference>
<dbReference type="GO" id="GO:0005524">
    <property type="term" value="F:ATP binding"/>
    <property type="evidence" value="ECO:0007669"/>
    <property type="project" value="InterPro"/>
</dbReference>
<dbReference type="GO" id="GO:0016887">
    <property type="term" value="F:ATP hydrolysis activity"/>
    <property type="evidence" value="ECO:0007669"/>
    <property type="project" value="InterPro"/>
</dbReference>
<dbReference type="GO" id="GO:0140664">
    <property type="term" value="F:ATP-dependent DNA damage sensor activity"/>
    <property type="evidence" value="ECO:0007669"/>
    <property type="project" value="InterPro"/>
</dbReference>
<dbReference type="GO" id="GO:0030983">
    <property type="term" value="F:mismatched DNA binding"/>
    <property type="evidence" value="ECO:0007669"/>
    <property type="project" value="InterPro"/>
</dbReference>
<dbReference type="GO" id="GO:0006298">
    <property type="term" value="P:mismatch repair"/>
    <property type="evidence" value="ECO:0007669"/>
    <property type="project" value="UniProtKB-UniRule"/>
</dbReference>
<dbReference type="CDD" id="cd16926">
    <property type="entry name" value="HATPase_MutL-MLH-PMS-like"/>
    <property type="match status" value="1"/>
</dbReference>
<dbReference type="CDD" id="cd00782">
    <property type="entry name" value="MutL_Trans"/>
    <property type="match status" value="1"/>
</dbReference>
<dbReference type="FunFam" id="3.30.565.10:FF:000003">
    <property type="entry name" value="DNA mismatch repair endonuclease MutL"/>
    <property type="match status" value="1"/>
</dbReference>
<dbReference type="Gene3D" id="3.30.230.10">
    <property type="match status" value="1"/>
</dbReference>
<dbReference type="Gene3D" id="3.30.565.10">
    <property type="entry name" value="Histidine kinase-like ATPase, C-terminal domain"/>
    <property type="match status" value="1"/>
</dbReference>
<dbReference type="Gene3D" id="3.30.1540.20">
    <property type="entry name" value="MutL, C-terminal domain, dimerisation subdomain"/>
    <property type="match status" value="1"/>
</dbReference>
<dbReference type="Gene3D" id="3.30.1370.100">
    <property type="entry name" value="MutL, C-terminal domain, regulatory subdomain"/>
    <property type="match status" value="1"/>
</dbReference>
<dbReference type="HAMAP" id="MF_00149">
    <property type="entry name" value="DNA_mis_repair"/>
    <property type="match status" value="1"/>
</dbReference>
<dbReference type="InterPro" id="IPR014762">
    <property type="entry name" value="DNA_mismatch_repair_CS"/>
</dbReference>
<dbReference type="InterPro" id="IPR020667">
    <property type="entry name" value="DNA_mismatch_repair_MutL"/>
</dbReference>
<dbReference type="InterPro" id="IPR013507">
    <property type="entry name" value="DNA_mismatch_S5_2-like"/>
</dbReference>
<dbReference type="InterPro" id="IPR036890">
    <property type="entry name" value="HATPase_C_sf"/>
</dbReference>
<dbReference type="InterPro" id="IPR002099">
    <property type="entry name" value="MutL/Mlh/PMS"/>
</dbReference>
<dbReference type="InterPro" id="IPR038973">
    <property type="entry name" value="MutL/Mlh/Pms-like"/>
</dbReference>
<dbReference type="InterPro" id="IPR014790">
    <property type="entry name" value="MutL_C"/>
</dbReference>
<dbReference type="InterPro" id="IPR042120">
    <property type="entry name" value="MutL_C_dimsub"/>
</dbReference>
<dbReference type="InterPro" id="IPR042121">
    <property type="entry name" value="MutL_C_regsub"/>
</dbReference>
<dbReference type="InterPro" id="IPR037198">
    <property type="entry name" value="MutL_C_sf"/>
</dbReference>
<dbReference type="InterPro" id="IPR020568">
    <property type="entry name" value="Ribosomal_Su5_D2-typ_SF"/>
</dbReference>
<dbReference type="InterPro" id="IPR014721">
    <property type="entry name" value="Ribsml_uS5_D2-typ_fold_subgr"/>
</dbReference>
<dbReference type="NCBIfam" id="TIGR00585">
    <property type="entry name" value="mutl"/>
    <property type="match status" value="1"/>
</dbReference>
<dbReference type="PANTHER" id="PTHR10073">
    <property type="entry name" value="DNA MISMATCH REPAIR PROTEIN MLH, PMS, MUTL"/>
    <property type="match status" value="1"/>
</dbReference>
<dbReference type="PANTHER" id="PTHR10073:SF12">
    <property type="entry name" value="DNA MISMATCH REPAIR PROTEIN MLH1"/>
    <property type="match status" value="1"/>
</dbReference>
<dbReference type="Pfam" id="PF01119">
    <property type="entry name" value="DNA_mis_repair"/>
    <property type="match status" value="1"/>
</dbReference>
<dbReference type="Pfam" id="PF13589">
    <property type="entry name" value="HATPase_c_3"/>
    <property type="match status" value="1"/>
</dbReference>
<dbReference type="Pfam" id="PF08676">
    <property type="entry name" value="MutL_C"/>
    <property type="match status" value="1"/>
</dbReference>
<dbReference type="SMART" id="SM01340">
    <property type="entry name" value="DNA_mis_repair"/>
    <property type="match status" value="1"/>
</dbReference>
<dbReference type="SMART" id="SM00853">
    <property type="entry name" value="MutL_C"/>
    <property type="match status" value="1"/>
</dbReference>
<dbReference type="SUPFAM" id="SSF55874">
    <property type="entry name" value="ATPase domain of HSP90 chaperone/DNA topoisomerase II/histidine kinase"/>
    <property type="match status" value="1"/>
</dbReference>
<dbReference type="SUPFAM" id="SSF118116">
    <property type="entry name" value="DNA mismatch repair protein MutL"/>
    <property type="match status" value="1"/>
</dbReference>
<dbReference type="SUPFAM" id="SSF54211">
    <property type="entry name" value="Ribosomal protein S5 domain 2-like"/>
    <property type="match status" value="1"/>
</dbReference>
<dbReference type="PROSITE" id="PS00058">
    <property type="entry name" value="DNA_MISMATCH_REPAIR_1"/>
    <property type="match status" value="1"/>
</dbReference>
<accession>A5FW68</accession>
<protein>
    <recommendedName>
        <fullName evidence="1">DNA mismatch repair protein MutL</fullName>
    </recommendedName>
</protein>
<gene>
    <name evidence="1" type="primary">mutL</name>
    <name type="ordered locus">Acry_0628</name>
</gene>
<sequence>MPIRRLDPTTINRIAAGEVIERPAAAVKELVENALDAGARRIGVTIEGGGIGRIEVTDDGHGIPEAELPLAIERHATSKLTDEALVRIATLGFRGEALPSIGAAGRLTVTSRPAGQDSAARIVVDGGAVREVEPVAGPVGTCVTVEDLFHATPARRKFLRSAGSEAGSCADAVRHLALAAPAVGFSLTIDGAASFDLPPQDRRERVAAIYGRADAEKLLEIEAVREEVALRGFISPASLTRAAARHQHMVVNGRPVRDPLLRMALRLAYRERIPAGRHPLAALWLEIPAEMLDVNVHPAKAELRFATPDAVRSLMIGAVQRALATPADLAAAPSVSMPRTSWAASSPMPRYPQAESRAARGFAEAELRGLDLPPARVAPEVLPESRPDYPLGTPIAQVFDTYILAQSGDGTLVLVDQHAAHERLTEIRLRAERDSGAIPAQALLAPSVVELPAEDIARLLGAAERLAGLGLEIEAFGPGAVLVRAVPAALAKADPAALARDVADTLAESGTAMALEAKLDAVLIRMACHRSVRAGRRLAFAEMEALLRAMETTPLAQTCPHGRPTVLRLSRGDLERMFGRAG</sequence>
<evidence type="ECO:0000255" key="1">
    <source>
        <dbReference type="HAMAP-Rule" id="MF_00149"/>
    </source>
</evidence>
<reference key="1">
    <citation type="submission" date="2007-05" db="EMBL/GenBank/DDBJ databases">
        <title>Complete sequence of chromosome of Acidiphilium cryptum JF-5.</title>
        <authorList>
            <consortium name="US DOE Joint Genome Institute"/>
            <person name="Copeland A."/>
            <person name="Lucas S."/>
            <person name="Lapidus A."/>
            <person name="Barry K."/>
            <person name="Detter J.C."/>
            <person name="Glavina del Rio T."/>
            <person name="Hammon N."/>
            <person name="Israni S."/>
            <person name="Dalin E."/>
            <person name="Tice H."/>
            <person name="Pitluck S."/>
            <person name="Sims D."/>
            <person name="Brettin T."/>
            <person name="Bruce D."/>
            <person name="Han C."/>
            <person name="Schmutz J."/>
            <person name="Larimer F."/>
            <person name="Land M."/>
            <person name="Hauser L."/>
            <person name="Kyrpides N."/>
            <person name="Kim E."/>
            <person name="Magnuson T."/>
            <person name="Richardson P."/>
        </authorList>
    </citation>
    <scope>NUCLEOTIDE SEQUENCE [LARGE SCALE GENOMIC DNA]</scope>
    <source>
        <strain>JF-5</strain>
    </source>
</reference>
<keyword id="KW-0227">DNA damage</keyword>
<keyword id="KW-0234">DNA repair</keyword>
<keyword id="KW-1185">Reference proteome</keyword>
<proteinExistence type="inferred from homology"/>
<comment type="function">
    <text evidence="1">This protein is involved in the repair of mismatches in DNA. It is required for dam-dependent methyl-directed DNA mismatch repair. May act as a 'molecular matchmaker', a protein that promotes the formation of a stable complex between two or more DNA-binding proteins in an ATP-dependent manner without itself being part of a final effector complex.</text>
</comment>
<comment type="similarity">
    <text evidence="1">Belongs to the DNA mismatch repair MutL/HexB family.</text>
</comment>
<organism>
    <name type="scientific">Acidiphilium cryptum (strain JF-5)</name>
    <dbReference type="NCBI Taxonomy" id="349163"/>
    <lineage>
        <taxon>Bacteria</taxon>
        <taxon>Pseudomonadati</taxon>
        <taxon>Pseudomonadota</taxon>
        <taxon>Alphaproteobacteria</taxon>
        <taxon>Acetobacterales</taxon>
        <taxon>Acidocellaceae</taxon>
        <taxon>Acidiphilium</taxon>
    </lineage>
</organism>